<reference key="1">
    <citation type="journal article" date="2007" name="Genome Res.">
        <title>Genome characteristics of facultatively symbiotic Frankia sp. strains reflect host range and host plant biogeography.</title>
        <authorList>
            <person name="Normand P."/>
            <person name="Lapierre P."/>
            <person name="Tisa L.S."/>
            <person name="Gogarten J.P."/>
            <person name="Alloisio N."/>
            <person name="Bagnarol E."/>
            <person name="Bassi C.A."/>
            <person name="Berry A.M."/>
            <person name="Bickhart D.M."/>
            <person name="Choisne N."/>
            <person name="Couloux A."/>
            <person name="Cournoyer B."/>
            <person name="Cruveiller S."/>
            <person name="Daubin V."/>
            <person name="Demange N."/>
            <person name="Francino M.P."/>
            <person name="Goltsman E."/>
            <person name="Huang Y."/>
            <person name="Kopp O.R."/>
            <person name="Labarre L."/>
            <person name="Lapidus A."/>
            <person name="Lavire C."/>
            <person name="Marechal J."/>
            <person name="Martinez M."/>
            <person name="Mastronunzio J.E."/>
            <person name="Mullin B.C."/>
            <person name="Niemann J."/>
            <person name="Pujic P."/>
            <person name="Rawnsley T."/>
            <person name="Rouy Z."/>
            <person name="Schenowitz C."/>
            <person name="Sellstedt A."/>
            <person name="Tavares F."/>
            <person name="Tomkins J.P."/>
            <person name="Vallenet D."/>
            <person name="Valverde C."/>
            <person name="Wall L.G."/>
            <person name="Wang Y."/>
            <person name="Medigue C."/>
            <person name="Benson D.R."/>
        </authorList>
    </citation>
    <scope>NUCLEOTIDE SEQUENCE [LARGE SCALE GENOMIC DNA]</scope>
    <source>
        <strain>DSM 45818 / CECT 9043 / HFP020203 / CcI3</strain>
    </source>
</reference>
<sequence>MVRFTARVAGLVQGVGFRDYVRTRGRRLGLVGSATNLPDGAVEVVAEGPEPACRDLLHLLMTGHTPGRTDRVEAVWQVAQSDLTDFRRK</sequence>
<keyword id="KW-0378">Hydrolase</keyword>
<keyword id="KW-1185">Reference proteome</keyword>
<feature type="chain" id="PRO_0000326712" description="Acylphosphatase">
    <location>
        <begin position="1"/>
        <end position="89"/>
    </location>
</feature>
<feature type="domain" description="Acylphosphatase-like" evidence="1">
    <location>
        <begin position="3"/>
        <end position="89"/>
    </location>
</feature>
<feature type="active site" evidence="1">
    <location>
        <position position="18"/>
    </location>
</feature>
<feature type="active site" evidence="1">
    <location>
        <position position="36"/>
    </location>
</feature>
<gene>
    <name type="primary">acyP</name>
    <name type="ordered locus">Francci3_3598</name>
</gene>
<organism>
    <name type="scientific">Frankia casuarinae (strain DSM 45818 / CECT 9043 / HFP020203 / CcI3)</name>
    <dbReference type="NCBI Taxonomy" id="106370"/>
    <lineage>
        <taxon>Bacteria</taxon>
        <taxon>Bacillati</taxon>
        <taxon>Actinomycetota</taxon>
        <taxon>Actinomycetes</taxon>
        <taxon>Frankiales</taxon>
        <taxon>Frankiaceae</taxon>
        <taxon>Frankia</taxon>
    </lineage>
</organism>
<proteinExistence type="inferred from homology"/>
<comment type="catalytic activity">
    <reaction>
        <text>an acyl phosphate + H2O = a carboxylate + phosphate + H(+)</text>
        <dbReference type="Rhea" id="RHEA:14965"/>
        <dbReference type="ChEBI" id="CHEBI:15377"/>
        <dbReference type="ChEBI" id="CHEBI:15378"/>
        <dbReference type="ChEBI" id="CHEBI:29067"/>
        <dbReference type="ChEBI" id="CHEBI:43474"/>
        <dbReference type="ChEBI" id="CHEBI:59918"/>
        <dbReference type="EC" id="3.6.1.7"/>
    </reaction>
</comment>
<comment type="similarity">
    <text evidence="2">Belongs to the acylphosphatase family.</text>
</comment>
<evidence type="ECO:0000255" key="1">
    <source>
        <dbReference type="PROSITE-ProRule" id="PRU00520"/>
    </source>
</evidence>
<evidence type="ECO:0000305" key="2"/>
<name>ACYP_FRACC</name>
<protein>
    <recommendedName>
        <fullName>Acylphosphatase</fullName>
        <ecNumber>3.6.1.7</ecNumber>
    </recommendedName>
    <alternativeName>
        <fullName>Acylphosphate phosphohydrolase</fullName>
    </alternativeName>
</protein>
<accession>Q2J6Z2</accession>
<dbReference type="EC" id="3.6.1.7"/>
<dbReference type="EMBL" id="CP000249">
    <property type="protein sequence ID" value="ABD12950.1"/>
    <property type="molecule type" value="Genomic_DNA"/>
</dbReference>
<dbReference type="SMR" id="Q2J6Z2"/>
<dbReference type="STRING" id="106370.Francci3_3598"/>
<dbReference type="KEGG" id="fra:Francci3_3598"/>
<dbReference type="eggNOG" id="COG1254">
    <property type="taxonomic scope" value="Bacteria"/>
</dbReference>
<dbReference type="HOGENOM" id="CLU_141932_3_0_11"/>
<dbReference type="PhylomeDB" id="Q2J6Z2"/>
<dbReference type="Proteomes" id="UP000001937">
    <property type="component" value="Chromosome"/>
</dbReference>
<dbReference type="GO" id="GO:0003998">
    <property type="term" value="F:acylphosphatase activity"/>
    <property type="evidence" value="ECO:0007669"/>
    <property type="project" value="UniProtKB-EC"/>
</dbReference>
<dbReference type="Gene3D" id="3.30.70.100">
    <property type="match status" value="1"/>
</dbReference>
<dbReference type="InterPro" id="IPR020456">
    <property type="entry name" value="Acylphosphatase"/>
</dbReference>
<dbReference type="InterPro" id="IPR001792">
    <property type="entry name" value="Acylphosphatase-like_dom"/>
</dbReference>
<dbReference type="InterPro" id="IPR036046">
    <property type="entry name" value="Acylphosphatase-like_dom_sf"/>
</dbReference>
<dbReference type="InterPro" id="IPR017968">
    <property type="entry name" value="Acylphosphatase_CS"/>
</dbReference>
<dbReference type="PANTHER" id="PTHR47268">
    <property type="entry name" value="ACYLPHOSPHATASE"/>
    <property type="match status" value="1"/>
</dbReference>
<dbReference type="PANTHER" id="PTHR47268:SF4">
    <property type="entry name" value="ACYLPHOSPHATASE"/>
    <property type="match status" value="1"/>
</dbReference>
<dbReference type="Pfam" id="PF00708">
    <property type="entry name" value="Acylphosphatase"/>
    <property type="match status" value="1"/>
</dbReference>
<dbReference type="SUPFAM" id="SSF54975">
    <property type="entry name" value="Acylphosphatase/BLUF domain-like"/>
    <property type="match status" value="1"/>
</dbReference>
<dbReference type="PROSITE" id="PS00150">
    <property type="entry name" value="ACYLPHOSPHATASE_1"/>
    <property type="match status" value="1"/>
</dbReference>
<dbReference type="PROSITE" id="PS51160">
    <property type="entry name" value="ACYLPHOSPHATASE_3"/>
    <property type="match status" value="1"/>
</dbReference>